<name>RS3_SHESR</name>
<reference key="1">
    <citation type="submission" date="2006-08" db="EMBL/GenBank/DDBJ databases">
        <title>Complete sequence of chromosome 1 of Shewanella sp. MR-7.</title>
        <authorList>
            <person name="Copeland A."/>
            <person name="Lucas S."/>
            <person name="Lapidus A."/>
            <person name="Barry K."/>
            <person name="Detter J.C."/>
            <person name="Glavina del Rio T."/>
            <person name="Hammon N."/>
            <person name="Israni S."/>
            <person name="Dalin E."/>
            <person name="Tice H."/>
            <person name="Pitluck S."/>
            <person name="Kiss H."/>
            <person name="Brettin T."/>
            <person name="Bruce D."/>
            <person name="Han C."/>
            <person name="Tapia R."/>
            <person name="Gilna P."/>
            <person name="Schmutz J."/>
            <person name="Larimer F."/>
            <person name="Land M."/>
            <person name="Hauser L."/>
            <person name="Kyrpides N."/>
            <person name="Mikhailova N."/>
            <person name="Nealson K."/>
            <person name="Konstantinidis K."/>
            <person name="Klappenbach J."/>
            <person name="Tiedje J."/>
            <person name="Richardson P."/>
        </authorList>
    </citation>
    <scope>NUCLEOTIDE SEQUENCE [LARGE SCALE GENOMIC DNA]</scope>
    <source>
        <strain>MR-7</strain>
    </source>
</reference>
<keyword id="KW-0687">Ribonucleoprotein</keyword>
<keyword id="KW-0689">Ribosomal protein</keyword>
<keyword id="KW-0694">RNA-binding</keyword>
<keyword id="KW-0699">rRNA-binding</keyword>
<protein>
    <recommendedName>
        <fullName evidence="1">Small ribosomal subunit protein uS3</fullName>
    </recommendedName>
    <alternativeName>
        <fullName evidence="2">30S ribosomal protein S3</fullName>
    </alternativeName>
</protein>
<evidence type="ECO:0000255" key="1">
    <source>
        <dbReference type="HAMAP-Rule" id="MF_01309"/>
    </source>
</evidence>
<evidence type="ECO:0000305" key="2"/>
<feature type="chain" id="PRO_0000293884" description="Small ribosomal subunit protein uS3">
    <location>
        <begin position="1"/>
        <end position="230"/>
    </location>
</feature>
<feature type="domain" description="KH type-2" evidence="1">
    <location>
        <begin position="39"/>
        <end position="107"/>
    </location>
</feature>
<proteinExistence type="inferred from homology"/>
<accession>Q0I099</accession>
<organism>
    <name type="scientific">Shewanella sp. (strain MR-7)</name>
    <dbReference type="NCBI Taxonomy" id="60481"/>
    <lineage>
        <taxon>Bacteria</taxon>
        <taxon>Pseudomonadati</taxon>
        <taxon>Pseudomonadota</taxon>
        <taxon>Gammaproteobacteria</taxon>
        <taxon>Alteromonadales</taxon>
        <taxon>Shewanellaceae</taxon>
        <taxon>Shewanella</taxon>
    </lineage>
</organism>
<dbReference type="EMBL" id="CP000444">
    <property type="protein sequence ID" value="ABI41206.1"/>
    <property type="molecule type" value="Genomic_DNA"/>
</dbReference>
<dbReference type="SMR" id="Q0I099"/>
<dbReference type="KEGG" id="shm:Shewmr7_0200"/>
<dbReference type="HOGENOM" id="CLU_058591_0_2_6"/>
<dbReference type="GO" id="GO:0022627">
    <property type="term" value="C:cytosolic small ribosomal subunit"/>
    <property type="evidence" value="ECO:0007669"/>
    <property type="project" value="TreeGrafter"/>
</dbReference>
<dbReference type="GO" id="GO:0003729">
    <property type="term" value="F:mRNA binding"/>
    <property type="evidence" value="ECO:0007669"/>
    <property type="project" value="UniProtKB-UniRule"/>
</dbReference>
<dbReference type="GO" id="GO:0019843">
    <property type="term" value="F:rRNA binding"/>
    <property type="evidence" value="ECO:0007669"/>
    <property type="project" value="UniProtKB-UniRule"/>
</dbReference>
<dbReference type="GO" id="GO:0003735">
    <property type="term" value="F:structural constituent of ribosome"/>
    <property type="evidence" value="ECO:0007669"/>
    <property type="project" value="InterPro"/>
</dbReference>
<dbReference type="GO" id="GO:0006412">
    <property type="term" value="P:translation"/>
    <property type="evidence" value="ECO:0007669"/>
    <property type="project" value="UniProtKB-UniRule"/>
</dbReference>
<dbReference type="CDD" id="cd02412">
    <property type="entry name" value="KH-II_30S_S3"/>
    <property type="match status" value="1"/>
</dbReference>
<dbReference type="FunFam" id="3.30.1140.32:FF:000001">
    <property type="entry name" value="30S ribosomal protein S3"/>
    <property type="match status" value="1"/>
</dbReference>
<dbReference type="FunFam" id="3.30.300.20:FF:000001">
    <property type="entry name" value="30S ribosomal protein S3"/>
    <property type="match status" value="1"/>
</dbReference>
<dbReference type="Gene3D" id="3.30.300.20">
    <property type="match status" value="1"/>
</dbReference>
<dbReference type="Gene3D" id="3.30.1140.32">
    <property type="entry name" value="Ribosomal protein S3, C-terminal domain"/>
    <property type="match status" value="1"/>
</dbReference>
<dbReference type="HAMAP" id="MF_01309_B">
    <property type="entry name" value="Ribosomal_uS3_B"/>
    <property type="match status" value="1"/>
</dbReference>
<dbReference type="InterPro" id="IPR004087">
    <property type="entry name" value="KH_dom"/>
</dbReference>
<dbReference type="InterPro" id="IPR015946">
    <property type="entry name" value="KH_dom-like_a/b"/>
</dbReference>
<dbReference type="InterPro" id="IPR004044">
    <property type="entry name" value="KH_dom_type_2"/>
</dbReference>
<dbReference type="InterPro" id="IPR009019">
    <property type="entry name" value="KH_sf_prok-type"/>
</dbReference>
<dbReference type="InterPro" id="IPR036419">
    <property type="entry name" value="Ribosomal_S3_C_sf"/>
</dbReference>
<dbReference type="InterPro" id="IPR005704">
    <property type="entry name" value="Ribosomal_uS3_bac-typ"/>
</dbReference>
<dbReference type="InterPro" id="IPR001351">
    <property type="entry name" value="Ribosomal_uS3_C"/>
</dbReference>
<dbReference type="InterPro" id="IPR018280">
    <property type="entry name" value="Ribosomal_uS3_CS"/>
</dbReference>
<dbReference type="NCBIfam" id="TIGR01009">
    <property type="entry name" value="rpsC_bact"/>
    <property type="match status" value="1"/>
</dbReference>
<dbReference type="PANTHER" id="PTHR11760">
    <property type="entry name" value="30S/40S RIBOSOMAL PROTEIN S3"/>
    <property type="match status" value="1"/>
</dbReference>
<dbReference type="PANTHER" id="PTHR11760:SF19">
    <property type="entry name" value="SMALL RIBOSOMAL SUBUNIT PROTEIN US3C"/>
    <property type="match status" value="1"/>
</dbReference>
<dbReference type="Pfam" id="PF07650">
    <property type="entry name" value="KH_2"/>
    <property type="match status" value="1"/>
</dbReference>
<dbReference type="Pfam" id="PF00189">
    <property type="entry name" value="Ribosomal_S3_C"/>
    <property type="match status" value="1"/>
</dbReference>
<dbReference type="SMART" id="SM00322">
    <property type="entry name" value="KH"/>
    <property type="match status" value="1"/>
</dbReference>
<dbReference type="SUPFAM" id="SSF54814">
    <property type="entry name" value="Prokaryotic type KH domain (KH-domain type II)"/>
    <property type="match status" value="1"/>
</dbReference>
<dbReference type="SUPFAM" id="SSF54821">
    <property type="entry name" value="Ribosomal protein S3 C-terminal domain"/>
    <property type="match status" value="1"/>
</dbReference>
<dbReference type="PROSITE" id="PS50823">
    <property type="entry name" value="KH_TYPE_2"/>
    <property type="match status" value="1"/>
</dbReference>
<dbReference type="PROSITE" id="PS00548">
    <property type="entry name" value="RIBOSOMAL_S3"/>
    <property type="match status" value="1"/>
</dbReference>
<gene>
    <name evidence="1" type="primary">rpsC</name>
    <name type="ordered locus">Shewmr7_0200</name>
</gene>
<sequence length="230" mass="25755">MGQKVHPNGIRLGITKPWISTWYADKSDYANNLNSDWEVRKYLADKLQAASVSKIVIERPAKSIRVTIHTARPGVVIGKKGEDVEVLRAAVSKLAGTPAQINIAEIRKPELDAKLVADSIAQQLERRVMFRRAMKRAVQNAMRIGAQGIKVEVSGRLGGAEIARSEWYREGRVPLHTLRADIDYSTSESHTQYGVIGIKVWIFKGEVLDGMLPQIEEPKQQQPKRKPRGK</sequence>
<comment type="function">
    <text evidence="1">Binds the lower part of the 30S subunit head. Binds mRNA in the 70S ribosome, positioning it for translation.</text>
</comment>
<comment type="subunit">
    <text evidence="1">Part of the 30S ribosomal subunit. Forms a tight complex with proteins S10 and S14.</text>
</comment>
<comment type="similarity">
    <text evidence="1">Belongs to the universal ribosomal protein uS3 family.</text>
</comment>